<dbReference type="EC" id="3.5.4.13" evidence="1"/>
<dbReference type="EMBL" id="CP001068">
    <property type="protein sequence ID" value="ACD27706.1"/>
    <property type="molecule type" value="Genomic_DNA"/>
</dbReference>
<dbReference type="SMR" id="B2UA12"/>
<dbReference type="STRING" id="402626.Rpic_2579"/>
<dbReference type="KEGG" id="rpi:Rpic_2579"/>
<dbReference type="eggNOG" id="COG0717">
    <property type="taxonomic scope" value="Bacteria"/>
</dbReference>
<dbReference type="HOGENOM" id="CLU_087476_4_0_4"/>
<dbReference type="UniPathway" id="UPA00610">
    <property type="reaction ID" value="UER00665"/>
</dbReference>
<dbReference type="GO" id="GO:0008829">
    <property type="term" value="F:dCTP deaminase activity"/>
    <property type="evidence" value="ECO:0007669"/>
    <property type="project" value="UniProtKB-UniRule"/>
</dbReference>
<dbReference type="GO" id="GO:0000166">
    <property type="term" value="F:nucleotide binding"/>
    <property type="evidence" value="ECO:0007669"/>
    <property type="project" value="UniProtKB-KW"/>
</dbReference>
<dbReference type="GO" id="GO:0006226">
    <property type="term" value="P:dUMP biosynthetic process"/>
    <property type="evidence" value="ECO:0007669"/>
    <property type="project" value="UniProtKB-UniPathway"/>
</dbReference>
<dbReference type="GO" id="GO:0006229">
    <property type="term" value="P:dUTP biosynthetic process"/>
    <property type="evidence" value="ECO:0007669"/>
    <property type="project" value="UniProtKB-UniRule"/>
</dbReference>
<dbReference type="GO" id="GO:0015949">
    <property type="term" value="P:nucleobase-containing small molecule interconversion"/>
    <property type="evidence" value="ECO:0007669"/>
    <property type="project" value="TreeGrafter"/>
</dbReference>
<dbReference type="CDD" id="cd07557">
    <property type="entry name" value="trimeric_dUTPase"/>
    <property type="match status" value="1"/>
</dbReference>
<dbReference type="FunFam" id="2.70.40.10:FF:000001">
    <property type="entry name" value="dCTP deaminase"/>
    <property type="match status" value="1"/>
</dbReference>
<dbReference type="Gene3D" id="2.70.40.10">
    <property type="match status" value="1"/>
</dbReference>
<dbReference type="HAMAP" id="MF_00146">
    <property type="entry name" value="dCTP_deaminase"/>
    <property type="match status" value="1"/>
</dbReference>
<dbReference type="InterPro" id="IPR011962">
    <property type="entry name" value="dCTP_deaminase"/>
</dbReference>
<dbReference type="InterPro" id="IPR036157">
    <property type="entry name" value="dUTPase-like_sf"/>
</dbReference>
<dbReference type="InterPro" id="IPR033704">
    <property type="entry name" value="dUTPase_trimeric"/>
</dbReference>
<dbReference type="NCBIfam" id="TIGR02274">
    <property type="entry name" value="dCTP_deam"/>
    <property type="match status" value="1"/>
</dbReference>
<dbReference type="PANTHER" id="PTHR42680">
    <property type="entry name" value="DCTP DEAMINASE"/>
    <property type="match status" value="1"/>
</dbReference>
<dbReference type="PANTHER" id="PTHR42680:SF3">
    <property type="entry name" value="DCTP DEAMINASE"/>
    <property type="match status" value="1"/>
</dbReference>
<dbReference type="Pfam" id="PF22769">
    <property type="entry name" value="DCD"/>
    <property type="match status" value="1"/>
</dbReference>
<dbReference type="SUPFAM" id="SSF51283">
    <property type="entry name" value="dUTPase-like"/>
    <property type="match status" value="1"/>
</dbReference>
<organism>
    <name type="scientific">Ralstonia pickettii (strain 12J)</name>
    <dbReference type="NCBI Taxonomy" id="402626"/>
    <lineage>
        <taxon>Bacteria</taxon>
        <taxon>Pseudomonadati</taxon>
        <taxon>Pseudomonadota</taxon>
        <taxon>Betaproteobacteria</taxon>
        <taxon>Burkholderiales</taxon>
        <taxon>Burkholderiaceae</taxon>
        <taxon>Ralstonia</taxon>
    </lineage>
</organism>
<sequence>MSIKSDKWIRRMAEQHGMIEPFEPDQVRESDGRRIVSYGTSSYGYDIRCADEFKIFTNINSTIVDPKNFDEKSFVDFKGDVCIIPPNSFALARTMEYFRIPRTVLTVCLGKSTYARCGIIVNVTPFEPEWEGYVTLEFSNTTPLPAKIYAGEGCAQVLFFESDEECETSYKDRGGKYQGQHGVTLPKT</sequence>
<name>DCD_RALPJ</name>
<keyword id="KW-0378">Hydrolase</keyword>
<keyword id="KW-0546">Nucleotide metabolism</keyword>
<keyword id="KW-0547">Nucleotide-binding</keyword>
<proteinExistence type="inferred from homology"/>
<reference key="1">
    <citation type="submission" date="2008-05" db="EMBL/GenBank/DDBJ databases">
        <title>Complete sequence of chromosome 1 of Ralstonia pickettii 12J.</title>
        <authorList>
            <person name="Lucas S."/>
            <person name="Copeland A."/>
            <person name="Lapidus A."/>
            <person name="Glavina del Rio T."/>
            <person name="Dalin E."/>
            <person name="Tice H."/>
            <person name="Bruce D."/>
            <person name="Goodwin L."/>
            <person name="Pitluck S."/>
            <person name="Meincke L."/>
            <person name="Brettin T."/>
            <person name="Detter J.C."/>
            <person name="Han C."/>
            <person name="Kuske C.R."/>
            <person name="Schmutz J."/>
            <person name="Larimer F."/>
            <person name="Land M."/>
            <person name="Hauser L."/>
            <person name="Kyrpides N."/>
            <person name="Mikhailova N."/>
            <person name="Marsh T."/>
            <person name="Richardson P."/>
        </authorList>
    </citation>
    <scope>NUCLEOTIDE SEQUENCE [LARGE SCALE GENOMIC DNA]</scope>
    <source>
        <strain>12J</strain>
    </source>
</reference>
<accession>B2UA12</accession>
<evidence type="ECO:0000255" key="1">
    <source>
        <dbReference type="HAMAP-Rule" id="MF_00146"/>
    </source>
</evidence>
<feature type="chain" id="PRO_1000096444" description="dCTP deaminase">
    <location>
        <begin position="1"/>
        <end position="188"/>
    </location>
</feature>
<feature type="active site" description="Proton donor/acceptor" evidence="1">
    <location>
        <position position="137"/>
    </location>
</feature>
<feature type="binding site" evidence="1">
    <location>
        <begin position="111"/>
        <end position="116"/>
    </location>
    <ligand>
        <name>dCTP</name>
        <dbReference type="ChEBI" id="CHEBI:61481"/>
    </ligand>
</feature>
<feature type="binding site" evidence="1">
    <location>
        <begin position="135"/>
        <end position="137"/>
    </location>
    <ligand>
        <name>dCTP</name>
        <dbReference type="ChEBI" id="CHEBI:61481"/>
    </ligand>
</feature>
<feature type="binding site" evidence="1">
    <location>
        <position position="156"/>
    </location>
    <ligand>
        <name>dCTP</name>
        <dbReference type="ChEBI" id="CHEBI:61481"/>
    </ligand>
</feature>
<feature type="binding site" evidence="1">
    <location>
        <position position="170"/>
    </location>
    <ligand>
        <name>dCTP</name>
        <dbReference type="ChEBI" id="CHEBI:61481"/>
    </ligand>
</feature>
<feature type="binding site" evidence="1">
    <location>
        <position position="180"/>
    </location>
    <ligand>
        <name>dCTP</name>
        <dbReference type="ChEBI" id="CHEBI:61481"/>
    </ligand>
</feature>
<gene>
    <name evidence="1" type="primary">dcd</name>
    <name type="ordered locus">Rpic_2579</name>
</gene>
<protein>
    <recommendedName>
        <fullName evidence="1">dCTP deaminase</fullName>
        <ecNumber evidence="1">3.5.4.13</ecNumber>
    </recommendedName>
    <alternativeName>
        <fullName evidence="1">Deoxycytidine triphosphate deaminase</fullName>
    </alternativeName>
</protein>
<comment type="function">
    <text evidence="1">Catalyzes the deamination of dCTP to dUTP.</text>
</comment>
<comment type="catalytic activity">
    <reaction evidence="1">
        <text>dCTP + H2O + H(+) = dUTP + NH4(+)</text>
        <dbReference type="Rhea" id="RHEA:22680"/>
        <dbReference type="ChEBI" id="CHEBI:15377"/>
        <dbReference type="ChEBI" id="CHEBI:15378"/>
        <dbReference type="ChEBI" id="CHEBI:28938"/>
        <dbReference type="ChEBI" id="CHEBI:61481"/>
        <dbReference type="ChEBI" id="CHEBI:61555"/>
        <dbReference type="EC" id="3.5.4.13"/>
    </reaction>
</comment>
<comment type="pathway">
    <text evidence="1">Pyrimidine metabolism; dUMP biosynthesis; dUMP from dCTP (dUTP route): step 1/2.</text>
</comment>
<comment type="subunit">
    <text evidence="1">Homotrimer.</text>
</comment>
<comment type="similarity">
    <text evidence="1">Belongs to the dCTP deaminase family.</text>
</comment>